<feature type="chain" id="PRO_1000059302" description="RNA pyrophosphohydrolase">
    <location>
        <begin position="1"/>
        <end position="175"/>
    </location>
</feature>
<feature type="domain" description="Nudix hydrolase" evidence="1">
    <location>
        <begin position="6"/>
        <end position="149"/>
    </location>
</feature>
<feature type="short sequence motif" description="Nudix box">
    <location>
        <begin position="38"/>
        <end position="59"/>
    </location>
</feature>
<dbReference type="EC" id="3.6.1.-" evidence="1"/>
<dbReference type="EMBL" id="CP000826">
    <property type="protein sequence ID" value="ABV42920.1"/>
    <property type="molecule type" value="Genomic_DNA"/>
</dbReference>
<dbReference type="SMR" id="A8GII0"/>
<dbReference type="STRING" id="399741.Spro_3824"/>
<dbReference type="KEGG" id="spe:Spro_3824"/>
<dbReference type="eggNOG" id="COG0494">
    <property type="taxonomic scope" value="Bacteria"/>
</dbReference>
<dbReference type="HOGENOM" id="CLU_087195_3_2_6"/>
<dbReference type="OrthoDB" id="9816040at2"/>
<dbReference type="GO" id="GO:0005737">
    <property type="term" value="C:cytoplasm"/>
    <property type="evidence" value="ECO:0007669"/>
    <property type="project" value="TreeGrafter"/>
</dbReference>
<dbReference type="GO" id="GO:0034353">
    <property type="term" value="F:mRNA 5'-diphosphatase activity"/>
    <property type="evidence" value="ECO:0007669"/>
    <property type="project" value="TreeGrafter"/>
</dbReference>
<dbReference type="GO" id="GO:0006402">
    <property type="term" value="P:mRNA catabolic process"/>
    <property type="evidence" value="ECO:0007669"/>
    <property type="project" value="TreeGrafter"/>
</dbReference>
<dbReference type="CDD" id="cd03671">
    <property type="entry name" value="NUDIX_Ap4A_hydrolase_plant_like"/>
    <property type="match status" value="1"/>
</dbReference>
<dbReference type="FunFam" id="3.90.79.10:FF:000001">
    <property type="entry name" value="RNA pyrophosphohydrolase"/>
    <property type="match status" value="1"/>
</dbReference>
<dbReference type="Gene3D" id="3.90.79.10">
    <property type="entry name" value="Nucleoside Triphosphate Pyrophosphohydrolase"/>
    <property type="match status" value="1"/>
</dbReference>
<dbReference type="HAMAP" id="MF_00298">
    <property type="entry name" value="Nudix_RppH"/>
    <property type="match status" value="1"/>
</dbReference>
<dbReference type="InterPro" id="IPR020476">
    <property type="entry name" value="Nudix_hydrolase"/>
</dbReference>
<dbReference type="InterPro" id="IPR015797">
    <property type="entry name" value="NUDIX_hydrolase-like_dom_sf"/>
</dbReference>
<dbReference type="InterPro" id="IPR020084">
    <property type="entry name" value="NUDIX_hydrolase_CS"/>
</dbReference>
<dbReference type="InterPro" id="IPR000086">
    <property type="entry name" value="NUDIX_hydrolase_dom"/>
</dbReference>
<dbReference type="InterPro" id="IPR022927">
    <property type="entry name" value="RppH"/>
</dbReference>
<dbReference type="NCBIfam" id="NF001934">
    <property type="entry name" value="PRK00714.1-1"/>
    <property type="match status" value="1"/>
</dbReference>
<dbReference type="NCBIfam" id="NF001937">
    <property type="entry name" value="PRK00714.1-4"/>
    <property type="match status" value="1"/>
</dbReference>
<dbReference type="NCBIfam" id="NF001938">
    <property type="entry name" value="PRK00714.1-5"/>
    <property type="match status" value="1"/>
</dbReference>
<dbReference type="PANTHER" id="PTHR23114">
    <property type="entry name" value="M7GPPPN-MRNA HYDROLASE"/>
    <property type="match status" value="1"/>
</dbReference>
<dbReference type="PANTHER" id="PTHR23114:SF17">
    <property type="entry name" value="M7GPPPN-MRNA HYDROLASE"/>
    <property type="match status" value="1"/>
</dbReference>
<dbReference type="Pfam" id="PF00293">
    <property type="entry name" value="NUDIX"/>
    <property type="match status" value="1"/>
</dbReference>
<dbReference type="PRINTS" id="PR00502">
    <property type="entry name" value="NUDIXFAMILY"/>
</dbReference>
<dbReference type="SUPFAM" id="SSF55811">
    <property type="entry name" value="Nudix"/>
    <property type="match status" value="1"/>
</dbReference>
<dbReference type="PROSITE" id="PS51462">
    <property type="entry name" value="NUDIX"/>
    <property type="match status" value="1"/>
</dbReference>
<dbReference type="PROSITE" id="PS00893">
    <property type="entry name" value="NUDIX_BOX"/>
    <property type="match status" value="1"/>
</dbReference>
<keyword id="KW-0378">Hydrolase</keyword>
<accession>A8GII0</accession>
<organism>
    <name type="scientific">Serratia proteamaculans (strain 568)</name>
    <dbReference type="NCBI Taxonomy" id="399741"/>
    <lineage>
        <taxon>Bacteria</taxon>
        <taxon>Pseudomonadati</taxon>
        <taxon>Pseudomonadota</taxon>
        <taxon>Gammaproteobacteria</taxon>
        <taxon>Enterobacterales</taxon>
        <taxon>Yersiniaceae</taxon>
        <taxon>Serratia</taxon>
    </lineage>
</organism>
<gene>
    <name evidence="1" type="primary">rppH</name>
    <name evidence="1" type="synonym">nudH</name>
    <name type="ordered locus">Spro_3824</name>
</gene>
<protein>
    <recommendedName>
        <fullName evidence="1">RNA pyrophosphohydrolase</fullName>
        <ecNumber evidence="1">3.6.1.-</ecNumber>
    </recommendedName>
    <alternativeName>
        <fullName evidence="1">(Di)nucleoside polyphosphate hydrolase</fullName>
    </alternativeName>
</protein>
<evidence type="ECO:0000255" key="1">
    <source>
        <dbReference type="HAMAP-Rule" id="MF_00298"/>
    </source>
</evidence>
<proteinExistence type="inferred from homology"/>
<comment type="function">
    <text evidence="1">Accelerates the degradation of transcripts by removing pyrophosphate from the 5'-end of triphosphorylated RNA, leading to a more labile monophosphorylated state that can stimulate subsequent ribonuclease cleavage.</text>
</comment>
<comment type="cofactor">
    <cofactor evidence="1">
        <name>a divalent metal cation</name>
        <dbReference type="ChEBI" id="CHEBI:60240"/>
    </cofactor>
</comment>
<comment type="similarity">
    <text evidence="1">Belongs to the Nudix hydrolase family. RppH subfamily.</text>
</comment>
<name>RPPH_SERP5</name>
<sequence>MIDDDGYRPNVGIVICNRQGQVLWARRYGQHSWQFPQGGINPGETAEQAMYRELFEEVGLSKKDVRILASTRNWLRYKLPKRLVRWDTKPVCIGQKQKWFLLQLMCNDADINMQRSSTPEFDGWRWVSFWYPVRQVVSFKRDVYRRVMKEFAVTVMPMQEQAAQRQTPAYRRKRG</sequence>
<reference key="1">
    <citation type="submission" date="2007-09" db="EMBL/GenBank/DDBJ databases">
        <title>Complete sequence of chromosome of Serratia proteamaculans 568.</title>
        <authorList>
            <consortium name="US DOE Joint Genome Institute"/>
            <person name="Copeland A."/>
            <person name="Lucas S."/>
            <person name="Lapidus A."/>
            <person name="Barry K."/>
            <person name="Glavina del Rio T."/>
            <person name="Dalin E."/>
            <person name="Tice H."/>
            <person name="Pitluck S."/>
            <person name="Chain P."/>
            <person name="Malfatti S."/>
            <person name="Shin M."/>
            <person name="Vergez L."/>
            <person name="Schmutz J."/>
            <person name="Larimer F."/>
            <person name="Land M."/>
            <person name="Hauser L."/>
            <person name="Kyrpides N."/>
            <person name="Kim E."/>
            <person name="Taghavi S."/>
            <person name="Newman L."/>
            <person name="Vangronsveld J."/>
            <person name="van der Lelie D."/>
            <person name="Richardson P."/>
        </authorList>
    </citation>
    <scope>NUCLEOTIDE SEQUENCE [LARGE SCALE GENOMIC DNA]</scope>
    <source>
        <strain>568</strain>
    </source>
</reference>